<proteinExistence type="inferred from homology"/>
<accession>A3DIM8</accession>
<name>ATPG_ACET2</name>
<sequence length="295" mass="34161">MAHINEIKLRMKSIRETRQITNAMKLISAAKLKKAKKQLEKASPYFEKVRSTMADILLRSGKIENKYFHARDEKTDKKKAYIVITGEKGFAGGYNHNIIKFTEECLKQDKDPLLFVAGNVGRNHFLKNKYNVYMEFDYPVQNPSIYMAREIMEVILDLFDKEVFDELYIIYTHMFSNIKMEPSIIKLLPLELDTLKEKLQINESTEKIVDGCMEYEPDPEYVFNVLVRKYIKGVVYGAFVESFTSEQNSRMTAMDNATANANDMLKKLDLLYNRARQSKITQDITEIVGGAEALK</sequence>
<dbReference type="EMBL" id="CP000568">
    <property type="protein sequence ID" value="ABN53807.1"/>
    <property type="molecule type" value="Genomic_DNA"/>
</dbReference>
<dbReference type="RefSeq" id="WP_003515457.1">
    <property type="nucleotide sequence ID" value="NC_009012.1"/>
</dbReference>
<dbReference type="SMR" id="A3DIM8"/>
<dbReference type="STRING" id="203119.Cthe_2607"/>
<dbReference type="GeneID" id="35803698"/>
<dbReference type="KEGG" id="cth:Cthe_2607"/>
<dbReference type="eggNOG" id="COG0224">
    <property type="taxonomic scope" value="Bacteria"/>
</dbReference>
<dbReference type="HOGENOM" id="CLU_050669_0_1_9"/>
<dbReference type="OrthoDB" id="9812769at2"/>
<dbReference type="Proteomes" id="UP000002145">
    <property type="component" value="Chromosome"/>
</dbReference>
<dbReference type="GO" id="GO:0005886">
    <property type="term" value="C:plasma membrane"/>
    <property type="evidence" value="ECO:0007669"/>
    <property type="project" value="UniProtKB-SubCell"/>
</dbReference>
<dbReference type="GO" id="GO:0045259">
    <property type="term" value="C:proton-transporting ATP synthase complex"/>
    <property type="evidence" value="ECO:0007669"/>
    <property type="project" value="UniProtKB-KW"/>
</dbReference>
<dbReference type="GO" id="GO:0005524">
    <property type="term" value="F:ATP binding"/>
    <property type="evidence" value="ECO:0007669"/>
    <property type="project" value="UniProtKB-UniRule"/>
</dbReference>
<dbReference type="GO" id="GO:0046933">
    <property type="term" value="F:proton-transporting ATP synthase activity, rotational mechanism"/>
    <property type="evidence" value="ECO:0007669"/>
    <property type="project" value="UniProtKB-UniRule"/>
</dbReference>
<dbReference type="GO" id="GO:0042777">
    <property type="term" value="P:proton motive force-driven plasma membrane ATP synthesis"/>
    <property type="evidence" value="ECO:0007669"/>
    <property type="project" value="UniProtKB-UniRule"/>
</dbReference>
<dbReference type="CDD" id="cd12151">
    <property type="entry name" value="F1-ATPase_gamma"/>
    <property type="match status" value="1"/>
</dbReference>
<dbReference type="Gene3D" id="3.40.1380.10">
    <property type="match status" value="1"/>
</dbReference>
<dbReference type="Gene3D" id="1.10.287.80">
    <property type="entry name" value="ATP synthase, gamma subunit, helix hairpin domain"/>
    <property type="match status" value="1"/>
</dbReference>
<dbReference type="HAMAP" id="MF_00815">
    <property type="entry name" value="ATP_synth_gamma_bact"/>
    <property type="match status" value="1"/>
</dbReference>
<dbReference type="InterPro" id="IPR035968">
    <property type="entry name" value="ATP_synth_F1_ATPase_gsu"/>
</dbReference>
<dbReference type="InterPro" id="IPR000131">
    <property type="entry name" value="ATP_synth_F1_gsu"/>
</dbReference>
<dbReference type="NCBIfam" id="TIGR01146">
    <property type="entry name" value="ATPsyn_F1gamma"/>
    <property type="match status" value="1"/>
</dbReference>
<dbReference type="PANTHER" id="PTHR11693">
    <property type="entry name" value="ATP SYNTHASE GAMMA CHAIN"/>
    <property type="match status" value="1"/>
</dbReference>
<dbReference type="PANTHER" id="PTHR11693:SF22">
    <property type="entry name" value="ATP SYNTHASE SUBUNIT GAMMA, MITOCHONDRIAL"/>
    <property type="match status" value="1"/>
</dbReference>
<dbReference type="Pfam" id="PF00231">
    <property type="entry name" value="ATP-synt"/>
    <property type="match status" value="1"/>
</dbReference>
<dbReference type="PRINTS" id="PR00126">
    <property type="entry name" value="ATPASEGAMMA"/>
</dbReference>
<dbReference type="SUPFAM" id="SSF52943">
    <property type="entry name" value="ATP synthase (F1-ATPase), gamma subunit"/>
    <property type="match status" value="1"/>
</dbReference>
<organism>
    <name type="scientific">Acetivibrio thermocellus (strain ATCC 27405 / DSM 1237 / JCM 9322 / NBRC 103400 / NCIMB 10682 / NRRL B-4536 / VPI 7372)</name>
    <name type="common">Clostridium thermocellum</name>
    <dbReference type="NCBI Taxonomy" id="203119"/>
    <lineage>
        <taxon>Bacteria</taxon>
        <taxon>Bacillati</taxon>
        <taxon>Bacillota</taxon>
        <taxon>Clostridia</taxon>
        <taxon>Eubacteriales</taxon>
        <taxon>Oscillospiraceae</taxon>
        <taxon>Acetivibrio</taxon>
    </lineage>
</organism>
<keyword id="KW-0066">ATP synthesis</keyword>
<keyword id="KW-1003">Cell membrane</keyword>
<keyword id="KW-0139">CF(1)</keyword>
<keyword id="KW-0375">Hydrogen ion transport</keyword>
<keyword id="KW-0406">Ion transport</keyword>
<keyword id="KW-0472">Membrane</keyword>
<keyword id="KW-1185">Reference proteome</keyword>
<keyword id="KW-0813">Transport</keyword>
<gene>
    <name evidence="1" type="primary">atpG</name>
    <name type="ordered locus">Cthe_2607</name>
</gene>
<comment type="function">
    <text evidence="1">Produces ATP from ADP in the presence of a proton gradient across the membrane. The gamma chain is believed to be important in regulating ATPase activity and the flow of protons through the CF(0) complex.</text>
</comment>
<comment type="subunit">
    <text evidence="1">F-type ATPases have 2 components, CF(1) - the catalytic core - and CF(0) - the membrane proton channel. CF(1) has five subunits: alpha(3), beta(3), gamma(1), delta(1), epsilon(1). CF(0) has three main subunits: a, b and c.</text>
</comment>
<comment type="subcellular location">
    <subcellularLocation>
        <location evidence="1">Cell membrane</location>
        <topology evidence="1">Peripheral membrane protein</topology>
    </subcellularLocation>
</comment>
<comment type="similarity">
    <text evidence="1">Belongs to the ATPase gamma chain family.</text>
</comment>
<protein>
    <recommendedName>
        <fullName evidence="1">ATP synthase gamma chain</fullName>
    </recommendedName>
    <alternativeName>
        <fullName evidence="1">ATP synthase F1 sector gamma subunit</fullName>
    </alternativeName>
    <alternativeName>
        <fullName evidence="1">F-ATPase gamma subunit</fullName>
    </alternativeName>
</protein>
<evidence type="ECO:0000255" key="1">
    <source>
        <dbReference type="HAMAP-Rule" id="MF_00815"/>
    </source>
</evidence>
<reference key="1">
    <citation type="submission" date="2007-02" db="EMBL/GenBank/DDBJ databases">
        <title>Complete sequence of Clostridium thermocellum ATCC 27405.</title>
        <authorList>
            <consortium name="US DOE Joint Genome Institute"/>
            <person name="Copeland A."/>
            <person name="Lucas S."/>
            <person name="Lapidus A."/>
            <person name="Barry K."/>
            <person name="Detter J.C."/>
            <person name="Glavina del Rio T."/>
            <person name="Hammon N."/>
            <person name="Israni S."/>
            <person name="Dalin E."/>
            <person name="Tice H."/>
            <person name="Pitluck S."/>
            <person name="Chertkov O."/>
            <person name="Brettin T."/>
            <person name="Bruce D."/>
            <person name="Han C."/>
            <person name="Tapia R."/>
            <person name="Gilna P."/>
            <person name="Schmutz J."/>
            <person name="Larimer F."/>
            <person name="Land M."/>
            <person name="Hauser L."/>
            <person name="Kyrpides N."/>
            <person name="Mikhailova N."/>
            <person name="Wu J.H.D."/>
            <person name="Newcomb M."/>
            <person name="Richardson P."/>
        </authorList>
    </citation>
    <scope>NUCLEOTIDE SEQUENCE [LARGE SCALE GENOMIC DNA]</scope>
    <source>
        <strain>ATCC 27405 / DSM 1237 / JCM 9322 / NBRC 103400 / NCIMB 10682 / NRRL B-4536 / VPI 7372</strain>
    </source>
</reference>
<feature type="chain" id="PRO_1000053197" description="ATP synthase gamma chain">
    <location>
        <begin position="1"/>
        <end position="295"/>
    </location>
</feature>